<sequence>MRVLVAMSGGVDSSVAAARMVAAGHDVVGVHLALSSAPGTLRTGSRGCCSKEDAGDARRVADVLGIPFYVWDFADRFKEDVIDDFVESYARGETPNPCVRCNERIKFSALASRALALGFDALATGHYARLADGRLRRAVDHDKDQSYVLAVLTAEQLRHAVFPIGDTPKAQIREEAARLGLAVADKADSHDICFIPSGDTKAFLGARIGVRRGNVVDAAGTVLAEHDGVHGFTIGQRKGLGIPGPGPDGSPRYVTGIDAQTGTVHVGDVADLEVTSLQGDAPVFTSGVAPTGPLECVVQVRAHGGVADAVAELRGDTLEVSLRTPLRGVAPGQTLVLYRRDPAGDEVLASATIRATH</sequence>
<dbReference type="EC" id="2.8.1.13" evidence="1"/>
<dbReference type="EMBL" id="CP000656">
    <property type="protein sequence ID" value="ABP46723.1"/>
    <property type="molecule type" value="Genomic_DNA"/>
</dbReference>
<dbReference type="SMR" id="A4TDZ4"/>
<dbReference type="STRING" id="350054.Mflv_4254"/>
<dbReference type="KEGG" id="mgi:Mflv_4254"/>
<dbReference type="eggNOG" id="COG0482">
    <property type="taxonomic scope" value="Bacteria"/>
</dbReference>
<dbReference type="HOGENOM" id="CLU_035188_0_2_11"/>
<dbReference type="OrthoDB" id="9800696at2"/>
<dbReference type="GO" id="GO:0005737">
    <property type="term" value="C:cytoplasm"/>
    <property type="evidence" value="ECO:0007669"/>
    <property type="project" value="UniProtKB-SubCell"/>
</dbReference>
<dbReference type="GO" id="GO:0005524">
    <property type="term" value="F:ATP binding"/>
    <property type="evidence" value="ECO:0007669"/>
    <property type="project" value="UniProtKB-KW"/>
</dbReference>
<dbReference type="GO" id="GO:0000049">
    <property type="term" value="F:tRNA binding"/>
    <property type="evidence" value="ECO:0007669"/>
    <property type="project" value="UniProtKB-KW"/>
</dbReference>
<dbReference type="GO" id="GO:0103016">
    <property type="term" value="F:tRNA-uridine 2-sulfurtransferase activity"/>
    <property type="evidence" value="ECO:0007669"/>
    <property type="project" value="UniProtKB-EC"/>
</dbReference>
<dbReference type="GO" id="GO:0002143">
    <property type="term" value="P:tRNA wobble position uridine thiolation"/>
    <property type="evidence" value="ECO:0007669"/>
    <property type="project" value="TreeGrafter"/>
</dbReference>
<dbReference type="CDD" id="cd01998">
    <property type="entry name" value="MnmA_TRMU-like"/>
    <property type="match status" value="1"/>
</dbReference>
<dbReference type="FunFam" id="3.40.50.620:FF:000057">
    <property type="entry name" value="tRNA-specific 2-thiouridylase MnmA"/>
    <property type="match status" value="1"/>
</dbReference>
<dbReference type="Gene3D" id="2.30.30.280">
    <property type="entry name" value="Adenine nucleotide alpha hydrolases-like domains"/>
    <property type="match status" value="1"/>
</dbReference>
<dbReference type="Gene3D" id="3.40.50.620">
    <property type="entry name" value="HUPs"/>
    <property type="match status" value="1"/>
</dbReference>
<dbReference type="Gene3D" id="2.40.30.10">
    <property type="entry name" value="Translation factors"/>
    <property type="match status" value="1"/>
</dbReference>
<dbReference type="HAMAP" id="MF_00144">
    <property type="entry name" value="tRNA_thiouridyl_MnmA"/>
    <property type="match status" value="1"/>
</dbReference>
<dbReference type="InterPro" id="IPR004506">
    <property type="entry name" value="MnmA-like"/>
</dbReference>
<dbReference type="InterPro" id="IPR046885">
    <property type="entry name" value="MnmA-like_C"/>
</dbReference>
<dbReference type="InterPro" id="IPR046884">
    <property type="entry name" value="MnmA-like_central"/>
</dbReference>
<dbReference type="InterPro" id="IPR023382">
    <property type="entry name" value="MnmA-like_central_sf"/>
</dbReference>
<dbReference type="InterPro" id="IPR014729">
    <property type="entry name" value="Rossmann-like_a/b/a_fold"/>
</dbReference>
<dbReference type="NCBIfam" id="NF001138">
    <property type="entry name" value="PRK00143.1"/>
    <property type="match status" value="1"/>
</dbReference>
<dbReference type="NCBIfam" id="TIGR00420">
    <property type="entry name" value="trmU"/>
    <property type="match status" value="1"/>
</dbReference>
<dbReference type="PANTHER" id="PTHR11933:SF5">
    <property type="entry name" value="MITOCHONDRIAL TRNA-SPECIFIC 2-THIOURIDYLASE 1"/>
    <property type="match status" value="1"/>
</dbReference>
<dbReference type="PANTHER" id="PTHR11933">
    <property type="entry name" value="TRNA 5-METHYLAMINOMETHYL-2-THIOURIDYLATE -METHYLTRANSFERASE"/>
    <property type="match status" value="1"/>
</dbReference>
<dbReference type="Pfam" id="PF03054">
    <property type="entry name" value="tRNA_Me_trans"/>
    <property type="match status" value="1"/>
</dbReference>
<dbReference type="Pfam" id="PF20258">
    <property type="entry name" value="tRNA_Me_trans_C"/>
    <property type="match status" value="1"/>
</dbReference>
<dbReference type="Pfam" id="PF20259">
    <property type="entry name" value="tRNA_Me_trans_M"/>
    <property type="match status" value="1"/>
</dbReference>
<dbReference type="SUPFAM" id="SSF52402">
    <property type="entry name" value="Adenine nucleotide alpha hydrolases-like"/>
    <property type="match status" value="1"/>
</dbReference>
<proteinExistence type="inferred from homology"/>
<feature type="chain" id="PRO_1000076567" description="tRNA-specific 2-thiouridylase MnmA">
    <location>
        <begin position="1"/>
        <end position="357"/>
    </location>
</feature>
<feature type="region of interest" description="Interaction with tRNA" evidence="1">
    <location>
        <begin position="143"/>
        <end position="145"/>
    </location>
</feature>
<feature type="active site" description="Nucleophile" evidence="1">
    <location>
        <position position="101"/>
    </location>
</feature>
<feature type="active site" description="Cysteine persulfide intermediate" evidence="1">
    <location>
        <position position="193"/>
    </location>
</feature>
<feature type="binding site" evidence="1">
    <location>
        <begin position="6"/>
        <end position="13"/>
    </location>
    <ligand>
        <name>ATP</name>
        <dbReference type="ChEBI" id="CHEBI:30616"/>
    </ligand>
</feature>
<feature type="binding site" evidence="1">
    <location>
        <position position="32"/>
    </location>
    <ligand>
        <name>ATP</name>
        <dbReference type="ChEBI" id="CHEBI:30616"/>
    </ligand>
</feature>
<feature type="binding site" evidence="1">
    <location>
        <position position="125"/>
    </location>
    <ligand>
        <name>ATP</name>
        <dbReference type="ChEBI" id="CHEBI:30616"/>
    </ligand>
</feature>
<feature type="site" description="Interaction with tRNA" evidence="1">
    <location>
        <position position="126"/>
    </location>
</feature>
<feature type="site" description="Interaction with tRNA" evidence="1">
    <location>
        <position position="333"/>
    </location>
</feature>
<feature type="disulfide bond" description="Alternate" evidence="1">
    <location>
        <begin position="101"/>
        <end position="193"/>
    </location>
</feature>
<name>MNMA_MYCGI</name>
<accession>A4TDZ4</accession>
<gene>
    <name evidence="1" type="primary">mnmA</name>
    <name type="synonym">trmU</name>
    <name type="ordered locus">Mflv_4254</name>
</gene>
<protein>
    <recommendedName>
        <fullName evidence="1">tRNA-specific 2-thiouridylase MnmA</fullName>
        <ecNumber evidence="1">2.8.1.13</ecNumber>
    </recommendedName>
</protein>
<evidence type="ECO:0000255" key="1">
    <source>
        <dbReference type="HAMAP-Rule" id="MF_00144"/>
    </source>
</evidence>
<organism>
    <name type="scientific">Mycolicibacterium gilvum (strain PYR-GCK)</name>
    <name type="common">Mycobacterium gilvum (strain PYR-GCK)</name>
    <dbReference type="NCBI Taxonomy" id="350054"/>
    <lineage>
        <taxon>Bacteria</taxon>
        <taxon>Bacillati</taxon>
        <taxon>Actinomycetota</taxon>
        <taxon>Actinomycetes</taxon>
        <taxon>Mycobacteriales</taxon>
        <taxon>Mycobacteriaceae</taxon>
        <taxon>Mycolicibacterium</taxon>
    </lineage>
</organism>
<comment type="function">
    <text evidence="1">Catalyzes the 2-thiolation of uridine at the wobble position (U34) of tRNA, leading to the formation of s(2)U34.</text>
</comment>
<comment type="catalytic activity">
    <reaction evidence="1">
        <text>S-sulfanyl-L-cysteinyl-[protein] + uridine(34) in tRNA + AH2 + ATP = 2-thiouridine(34) in tRNA + L-cysteinyl-[protein] + A + AMP + diphosphate + H(+)</text>
        <dbReference type="Rhea" id="RHEA:47032"/>
        <dbReference type="Rhea" id="RHEA-COMP:10131"/>
        <dbReference type="Rhea" id="RHEA-COMP:11726"/>
        <dbReference type="Rhea" id="RHEA-COMP:11727"/>
        <dbReference type="Rhea" id="RHEA-COMP:11728"/>
        <dbReference type="ChEBI" id="CHEBI:13193"/>
        <dbReference type="ChEBI" id="CHEBI:15378"/>
        <dbReference type="ChEBI" id="CHEBI:17499"/>
        <dbReference type="ChEBI" id="CHEBI:29950"/>
        <dbReference type="ChEBI" id="CHEBI:30616"/>
        <dbReference type="ChEBI" id="CHEBI:33019"/>
        <dbReference type="ChEBI" id="CHEBI:61963"/>
        <dbReference type="ChEBI" id="CHEBI:65315"/>
        <dbReference type="ChEBI" id="CHEBI:87170"/>
        <dbReference type="ChEBI" id="CHEBI:456215"/>
        <dbReference type="EC" id="2.8.1.13"/>
    </reaction>
</comment>
<comment type="subcellular location">
    <subcellularLocation>
        <location evidence="1">Cytoplasm</location>
    </subcellularLocation>
</comment>
<comment type="similarity">
    <text evidence="1">Belongs to the MnmA/TRMU family.</text>
</comment>
<keyword id="KW-0067">ATP-binding</keyword>
<keyword id="KW-0963">Cytoplasm</keyword>
<keyword id="KW-1015">Disulfide bond</keyword>
<keyword id="KW-0547">Nucleotide-binding</keyword>
<keyword id="KW-0694">RNA-binding</keyword>
<keyword id="KW-0808">Transferase</keyword>
<keyword id="KW-0819">tRNA processing</keyword>
<keyword id="KW-0820">tRNA-binding</keyword>
<reference key="1">
    <citation type="submission" date="2007-04" db="EMBL/GenBank/DDBJ databases">
        <title>Complete sequence of chromosome of Mycobacterium gilvum PYR-GCK.</title>
        <authorList>
            <consortium name="US DOE Joint Genome Institute"/>
            <person name="Copeland A."/>
            <person name="Lucas S."/>
            <person name="Lapidus A."/>
            <person name="Barry K."/>
            <person name="Detter J.C."/>
            <person name="Glavina del Rio T."/>
            <person name="Hammon N."/>
            <person name="Israni S."/>
            <person name="Dalin E."/>
            <person name="Tice H."/>
            <person name="Pitluck S."/>
            <person name="Chain P."/>
            <person name="Malfatti S."/>
            <person name="Shin M."/>
            <person name="Vergez L."/>
            <person name="Schmutz J."/>
            <person name="Larimer F."/>
            <person name="Land M."/>
            <person name="Hauser L."/>
            <person name="Kyrpides N."/>
            <person name="Mikhailova N."/>
            <person name="Miller C."/>
            <person name="Richardson P."/>
        </authorList>
    </citation>
    <scope>NUCLEOTIDE SEQUENCE [LARGE SCALE GENOMIC DNA]</scope>
    <source>
        <strain>PYR-GCK</strain>
    </source>
</reference>